<sequence length="250" mass="28082">MAEQTLSFVDCLTSRFPTVRVSVAQPRGEITLDVPAVEWCAVCRALRDEFDFEQLSDLCGVDYLGYGNTEWDTTDVSAQGFSRGVAGKAVGRFAWGEFPSAGSNDGTQPWDVPQERFAVLAHLISYRHNRRLRVRCFASNDALPIVASLTDVWPGVNWFEREAFDLFGIVFEGHPDLRRILTDYGFIGHPFRKDFPLTGNVEVRYDEEKKRVVYVPVTSVEPRVSVPRVIRDDARFGAAAGESTHSETVK</sequence>
<name>NUOC_XYLFA</name>
<accession>Q9PGJ3</accession>
<comment type="function">
    <text evidence="1">NDH-1 shuttles electrons from NADH, via FMN and iron-sulfur (Fe-S) centers, to quinones in the respiratory chain. The immediate electron acceptor for the enzyme in this species is believed to be ubiquinone. Couples the redox reaction to proton translocation (for every two electrons transferred, four hydrogen ions are translocated across the cytoplasmic membrane), and thus conserves the redox energy in a proton gradient.</text>
</comment>
<comment type="catalytic activity">
    <reaction evidence="1">
        <text>a quinone + NADH + 5 H(+)(in) = a quinol + NAD(+) + 4 H(+)(out)</text>
        <dbReference type="Rhea" id="RHEA:57888"/>
        <dbReference type="ChEBI" id="CHEBI:15378"/>
        <dbReference type="ChEBI" id="CHEBI:24646"/>
        <dbReference type="ChEBI" id="CHEBI:57540"/>
        <dbReference type="ChEBI" id="CHEBI:57945"/>
        <dbReference type="ChEBI" id="CHEBI:132124"/>
    </reaction>
</comment>
<comment type="subunit">
    <text evidence="1">NDH-1 is composed of 14 different subunits. Subunits NuoB, C, D, E, F, and G constitute the peripheral sector of the complex.</text>
</comment>
<comment type="subcellular location">
    <subcellularLocation>
        <location evidence="1">Cell inner membrane</location>
        <topology evidence="1">Peripheral membrane protein</topology>
        <orientation evidence="1">Cytoplasmic side</orientation>
    </subcellularLocation>
</comment>
<comment type="similarity">
    <text evidence="1">Belongs to the complex I 30 kDa subunit family.</text>
</comment>
<proteinExistence type="inferred from homology"/>
<gene>
    <name evidence="1" type="primary">nuoC</name>
    <name type="ordered locus">XF_0307</name>
</gene>
<protein>
    <recommendedName>
        <fullName evidence="1">NADH-quinone oxidoreductase subunit C</fullName>
        <ecNumber evidence="1">7.1.1.-</ecNumber>
    </recommendedName>
    <alternativeName>
        <fullName evidence="1">NADH dehydrogenase I subunit C</fullName>
    </alternativeName>
    <alternativeName>
        <fullName evidence="1">NDH-1 subunit C</fullName>
    </alternativeName>
</protein>
<keyword id="KW-0997">Cell inner membrane</keyword>
<keyword id="KW-1003">Cell membrane</keyword>
<keyword id="KW-0472">Membrane</keyword>
<keyword id="KW-0520">NAD</keyword>
<keyword id="KW-0874">Quinone</keyword>
<keyword id="KW-1278">Translocase</keyword>
<keyword id="KW-0813">Transport</keyword>
<keyword id="KW-0830">Ubiquinone</keyword>
<feature type="chain" id="PRO_0000358231" description="NADH-quinone oxidoreductase subunit C">
    <location>
        <begin position="1"/>
        <end position="250"/>
    </location>
</feature>
<evidence type="ECO:0000255" key="1">
    <source>
        <dbReference type="HAMAP-Rule" id="MF_01357"/>
    </source>
</evidence>
<dbReference type="EC" id="7.1.1.-" evidence="1"/>
<dbReference type="EMBL" id="AE003849">
    <property type="protein sequence ID" value="AAF83118.1"/>
    <property type="molecule type" value="Genomic_DNA"/>
</dbReference>
<dbReference type="PIR" id="E82821">
    <property type="entry name" value="E82821"/>
</dbReference>
<dbReference type="RefSeq" id="WP_010892843.1">
    <property type="nucleotide sequence ID" value="NC_002488.3"/>
</dbReference>
<dbReference type="SMR" id="Q9PGJ3"/>
<dbReference type="STRING" id="160492.XF_0307"/>
<dbReference type="KEGG" id="xfa:XF_0307"/>
<dbReference type="PATRIC" id="fig|160492.11.peg.335"/>
<dbReference type="eggNOG" id="COG0852">
    <property type="taxonomic scope" value="Bacteria"/>
</dbReference>
<dbReference type="HOGENOM" id="CLU_042628_2_1_6"/>
<dbReference type="Proteomes" id="UP000000812">
    <property type="component" value="Chromosome"/>
</dbReference>
<dbReference type="GO" id="GO:0005886">
    <property type="term" value="C:plasma membrane"/>
    <property type="evidence" value="ECO:0007669"/>
    <property type="project" value="UniProtKB-SubCell"/>
</dbReference>
<dbReference type="GO" id="GO:0008137">
    <property type="term" value="F:NADH dehydrogenase (ubiquinone) activity"/>
    <property type="evidence" value="ECO:0007669"/>
    <property type="project" value="InterPro"/>
</dbReference>
<dbReference type="GO" id="GO:0050136">
    <property type="term" value="F:NADH:ubiquinone reductase (non-electrogenic) activity"/>
    <property type="evidence" value="ECO:0007669"/>
    <property type="project" value="UniProtKB-UniRule"/>
</dbReference>
<dbReference type="GO" id="GO:0048038">
    <property type="term" value="F:quinone binding"/>
    <property type="evidence" value="ECO:0007669"/>
    <property type="project" value="UniProtKB-KW"/>
</dbReference>
<dbReference type="Gene3D" id="3.30.460.80">
    <property type="entry name" value="NADH:ubiquinone oxidoreductase, 30kDa subunit"/>
    <property type="match status" value="1"/>
</dbReference>
<dbReference type="HAMAP" id="MF_01357">
    <property type="entry name" value="NDH1_NuoC"/>
    <property type="match status" value="1"/>
</dbReference>
<dbReference type="InterPro" id="IPR010218">
    <property type="entry name" value="NADH_DH_suC"/>
</dbReference>
<dbReference type="InterPro" id="IPR037232">
    <property type="entry name" value="NADH_quin_OxRdtase_su_C/D-like"/>
</dbReference>
<dbReference type="InterPro" id="IPR001268">
    <property type="entry name" value="NADH_UbQ_OxRdtase_30kDa_su"/>
</dbReference>
<dbReference type="InterPro" id="IPR020396">
    <property type="entry name" value="NADH_UbQ_OxRdtase_CS"/>
</dbReference>
<dbReference type="NCBIfam" id="NF004730">
    <property type="entry name" value="PRK06074.1-1"/>
    <property type="match status" value="1"/>
</dbReference>
<dbReference type="NCBIfam" id="NF004732">
    <property type="entry name" value="PRK06074.1-4"/>
    <property type="match status" value="1"/>
</dbReference>
<dbReference type="PANTHER" id="PTHR10884:SF14">
    <property type="entry name" value="NADH DEHYDROGENASE [UBIQUINONE] IRON-SULFUR PROTEIN 3, MITOCHONDRIAL"/>
    <property type="match status" value="1"/>
</dbReference>
<dbReference type="PANTHER" id="PTHR10884">
    <property type="entry name" value="NADH DEHYDROGENASE UBIQUINONE IRON-SULFUR PROTEIN 3"/>
    <property type="match status" value="1"/>
</dbReference>
<dbReference type="Pfam" id="PF00329">
    <property type="entry name" value="Complex1_30kDa"/>
    <property type="match status" value="1"/>
</dbReference>
<dbReference type="SUPFAM" id="SSF143243">
    <property type="entry name" value="Nqo5-like"/>
    <property type="match status" value="1"/>
</dbReference>
<dbReference type="PROSITE" id="PS00542">
    <property type="entry name" value="COMPLEX1_30K"/>
    <property type="match status" value="1"/>
</dbReference>
<organism>
    <name type="scientific">Xylella fastidiosa (strain 9a5c)</name>
    <dbReference type="NCBI Taxonomy" id="160492"/>
    <lineage>
        <taxon>Bacteria</taxon>
        <taxon>Pseudomonadati</taxon>
        <taxon>Pseudomonadota</taxon>
        <taxon>Gammaproteobacteria</taxon>
        <taxon>Lysobacterales</taxon>
        <taxon>Lysobacteraceae</taxon>
        <taxon>Xylella</taxon>
    </lineage>
</organism>
<reference key="1">
    <citation type="journal article" date="2000" name="Nature">
        <title>The genome sequence of the plant pathogen Xylella fastidiosa.</title>
        <authorList>
            <person name="Simpson A.J.G."/>
            <person name="Reinach F.C."/>
            <person name="Arruda P."/>
            <person name="Abreu F.A."/>
            <person name="Acencio M."/>
            <person name="Alvarenga R."/>
            <person name="Alves L.M.C."/>
            <person name="Araya J.E."/>
            <person name="Baia G.S."/>
            <person name="Baptista C.S."/>
            <person name="Barros M.H."/>
            <person name="Bonaccorsi E.D."/>
            <person name="Bordin S."/>
            <person name="Bove J.M."/>
            <person name="Briones M.R.S."/>
            <person name="Bueno M.R.P."/>
            <person name="Camargo A.A."/>
            <person name="Camargo L.E.A."/>
            <person name="Carraro D.M."/>
            <person name="Carrer H."/>
            <person name="Colauto N.B."/>
            <person name="Colombo C."/>
            <person name="Costa F.F."/>
            <person name="Costa M.C.R."/>
            <person name="Costa-Neto C.M."/>
            <person name="Coutinho L.L."/>
            <person name="Cristofani M."/>
            <person name="Dias-Neto E."/>
            <person name="Docena C."/>
            <person name="El-Dorry H."/>
            <person name="Facincani A.P."/>
            <person name="Ferreira A.J.S."/>
            <person name="Ferreira V.C.A."/>
            <person name="Ferro J.A."/>
            <person name="Fraga J.S."/>
            <person name="Franca S.C."/>
            <person name="Franco M.C."/>
            <person name="Frohme M."/>
            <person name="Furlan L.R."/>
            <person name="Garnier M."/>
            <person name="Goldman G.H."/>
            <person name="Goldman M.H.S."/>
            <person name="Gomes S.L."/>
            <person name="Gruber A."/>
            <person name="Ho P.L."/>
            <person name="Hoheisel J.D."/>
            <person name="Junqueira M.L."/>
            <person name="Kemper E.L."/>
            <person name="Kitajima J.P."/>
            <person name="Krieger J.E."/>
            <person name="Kuramae E.E."/>
            <person name="Laigret F."/>
            <person name="Lambais M.R."/>
            <person name="Leite L.C.C."/>
            <person name="Lemos E.G.M."/>
            <person name="Lemos M.V.F."/>
            <person name="Lopes S.A."/>
            <person name="Lopes C.R."/>
            <person name="Machado J.A."/>
            <person name="Machado M.A."/>
            <person name="Madeira A.M.B.N."/>
            <person name="Madeira H.M.F."/>
            <person name="Marino C.L."/>
            <person name="Marques M.V."/>
            <person name="Martins E.A.L."/>
            <person name="Martins E.M.F."/>
            <person name="Matsukuma A.Y."/>
            <person name="Menck C.F.M."/>
            <person name="Miracca E.C."/>
            <person name="Miyaki C.Y."/>
            <person name="Monteiro-Vitorello C.B."/>
            <person name="Moon D.H."/>
            <person name="Nagai M.A."/>
            <person name="Nascimento A.L.T.O."/>
            <person name="Netto L.E.S."/>
            <person name="Nhani A. Jr."/>
            <person name="Nobrega F.G."/>
            <person name="Nunes L.R."/>
            <person name="Oliveira M.A."/>
            <person name="de Oliveira M.C."/>
            <person name="de Oliveira R.C."/>
            <person name="Palmieri D.A."/>
            <person name="Paris A."/>
            <person name="Peixoto B.R."/>
            <person name="Pereira G.A.G."/>
            <person name="Pereira H.A. Jr."/>
            <person name="Pesquero J.B."/>
            <person name="Quaggio R.B."/>
            <person name="Roberto P.G."/>
            <person name="Rodrigues V."/>
            <person name="de Rosa A.J.M."/>
            <person name="de Rosa V.E. Jr."/>
            <person name="de Sa R.G."/>
            <person name="Santelli R.V."/>
            <person name="Sawasaki H.E."/>
            <person name="da Silva A.C.R."/>
            <person name="da Silva A.M."/>
            <person name="da Silva F.R."/>
            <person name="Silva W.A. Jr."/>
            <person name="da Silveira J.F."/>
            <person name="Silvestri M.L.Z."/>
            <person name="Siqueira W.J."/>
            <person name="de Souza A.A."/>
            <person name="de Souza A.P."/>
            <person name="Terenzi M.F."/>
            <person name="Truffi D."/>
            <person name="Tsai S.M."/>
            <person name="Tsuhako M.H."/>
            <person name="Vallada H."/>
            <person name="Van Sluys M.A."/>
            <person name="Verjovski-Almeida S."/>
            <person name="Vettore A.L."/>
            <person name="Zago M.A."/>
            <person name="Zatz M."/>
            <person name="Meidanis J."/>
            <person name="Setubal J.C."/>
        </authorList>
    </citation>
    <scope>NUCLEOTIDE SEQUENCE [LARGE SCALE GENOMIC DNA]</scope>
    <source>
        <strain>9a5c</strain>
    </source>
</reference>